<dbReference type="EC" id="3.6.1.-" evidence="1"/>
<dbReference type="EMBL" id="AM494475">
    <property type="protein sequence ID" value="CAM79656.1"/>
    <property type="molecule type" value="Genomic_DNA"/>
</dbReference>
<dbReference type="RefSeq" id="WP_011944565.1">
    <property type="nucleotide sequence ID" value="NC_009488.1"/>
</dbReference>
<dbReference type="SMR" id="A5CD16"/>
<dbReference type="KEGG" id="ots:OTBS_0590"/>
<dbReference type="eggNOG" id="COG0494">
    <property type="taxonomic scope" value="Bacteria"/>
</dbReference>
<dbReference type="HOGENOM" id="CLU_087195_3_0_5"/>
<dbReference type="Proteomes" id="UP000001565">
    <property type="component" value="Chromosome"/>
</dbReference>
<dbReference type="GO" id="GO:0034432">
    <property type="term" value="F:bis(5'-adenosyl)-pentaphosphatase activity"/>
    <property type="evidence" value="ECO:0007669"/>
    <property type="project" value="TreeGrafter"/>
</dbReference>
<dbReference type="GO" id="GO:0008893">
    <property type="term" value="F:guanosine-3',5'-bis(diphosphate) 3'-diphosphatase activity"/>
    <property type="evidence" value="ECO:0007669"/>
    <property type="project" value="TreeGrafter"/>
</dbReference>
<dbReference type="GO" id="GO:0006753">
    <property type="term" value="P:nucleoside phosphate metabolic process"/>
    <property type="evidence" value="ECO:0007669"/>
    <property type="project" value="TreeGrafter"/>
</dbReference>
<dbReference type="GO" id="GO:0019693">
    <property type="term" value="P:ribose phosphate metabolic process"/>
    <property type="evidence" value="ECO:0007669"/>
    <property type="project" value="TreeGrafter"/>
</dbReference>
<dbReference type="CDD" id="cd03671">
    <property type="entry name" value="NUDIX_Ap4A_hydrolase_plant_like"/>
    <property type="match status" value="1"/>
</dbReference>
<dbReference type="Gene3D" id="3.90.79.10">
    <property type="entry name" value="Nucleoside Triphosphate Pyrophosphohydrolase"/>
    <property type="match status" value="1"/>
</dbReference>
<dbReference type="HAMAP" id="MF_00298">
    <property type="entry name" value="Nudix_RppH"/>
    <property type="match status" value="1"/>
</dbReference>
<dbReference type="InterPro" id="IPR015797">
    <property type="entry name" value="NUDIX_hydrolase-like_dom_sf"/>
</dbReference>
<dbReference type="InterPro" id="IPR020084">
    <property type="entry name" value="NUDIX_hydrolase_CS"/>
</dbReference>
<dbReference type="InterPro" id="IPR000086">
    <property type="entry name" value="NUDIX_hydrolase_dom"/>
</dbReference>
<dbReference type="InterPro" id="IPR022927">
    <property type="entry name" value="RppH"/>
</dbReference>
<dbReference type="NCBIfam" id="NF001936">
    <property type="entry name" value="PRK00714.1-3"/>
    <property type="match status" value="1"/>
</dbReference>
<dbReference type="NCBIfam" id="NF001938">
    <property type="entry name" value="PRK00714.1-5"/>
    <property type="match status" value="1"/>
</dbReference>
<dbReference type="PANTHER" id="PTHR11839:SF22">
    <property type="entry name" value="NUDIX HYDROLASE 26, CHLOROPLASTIC"/>
    <property type="match status" value="1"/>
</dbReference>
<dbReference type="PANTHER" id="PTHR11839">
    <property type="entry name" value="UDP/ADP-SUGAR PYROPHOSPHATASE"/>
    <property type="match status" value="1"/>
</dbReference>
<dbReference type="Pfam" id="PF00293">
    <property type="entry name" value="NUDIX"/>
    <property type="match status" value="1"/>
</dbReference>
<dbReference type="SUPFAM" id="SSF55811">
    <property type="entry name" value="Nudix"/>
    <property type="match status" value="1"/>
</dbReference>
<dbReference type="PROSITE" id="PS51462">
    <property type="entry name" value="NUDIX"/>
    <property type="match status" value="1"/>
</dbReference>
<dbReference type="PROSITE" id="PS00893">
    <property type="entry name" value="NUDIX_BOX"/>
    <property type="match status" value="1"/>
</dbReference>
<accession>A5CD16</accession>
<keyword id="KW-0378">Hydrolase</keyword>
<keyword id="KW-1185">Reference proteome</keyword>
<reference key="1">
    <citation type="journal article" date="2007" name="Proc. Natl. Acad. Sci. U.S.A.">
        <title>The Orientia tsutsugamushi genome reveals massive proliferation of conjugative type IV secretion system and host-cell interaction genes.</title>
        <authorList>
            <person name="Cho N.-H."/>
            <person name="Kim H.-R."/>
            <person name="Lee J.-H."/>
            <person name="Kim S.-Y."/>
            <person name="Kim J."/>
            <person name="Cha S."/>
            <person name="Kim S.-Y."/>
            <person name="Darby A.C."/>
            <person name="Fuxelius H.-H."/>
            <person name="Yin J."/>
            <person name="Kim J.H."/>
            <person name="Kim J."/>
            <person name="Lee S.J."/>
            <person name="Koh Y.-S."/>
            <person name="Jang W.-J."/>
            <person name="Park K.-H."/>
            <person name="Andersson S.G.E."/>
            <person name="Choi M.-S."/>
            <person name="Kim I.-S."/>
        </authorList>
    </citation>
    <scope>NUCLEOTIDE SEQUENCE [LARGE SCALE GENOMIC DNA]</scope>
    <source>
        <strain>Boryong</strain>
    </source>
</reference>
<name>RPPH_ORITB</name>
<evidence type="ECO:0000255" key="1">
    <source>
        <dbReference type="HAMAP-Rule" id="MF_00298"/>
    </source>
</evidence>
<comment type="function">
    <text evidence="1">Accelerates the degradation of transcripts by removing pyrophosphate from the 5'-end of triphosphorylated RNA, leading to a more labile monophosphorylated state that can stimulate subsequent ribonuclease cleavage.</text>
</comment>
<comment type="cofactor">
    <cofactor evidence="1">
        <name>a divalent metal cation</name>
        <dbReference type="ChEBI" id="CHEBI:60240"/>
    </cofactor>
</comment>
<comment type="similarity">
    <text evidence="1">Belongs to the Nudix hydrolase family. RppH subfamily.</text>
</comment>
<gene>
    <name evidence="1" type="primary">rppH</name>
    <name evidence="1" type="synonym">nudH</name>
    <name type="ordered locus">OTBS_0590</name>
</gene>
<protein>
    <recommendedName>
        <fullName evidence="1">RNA pyrophosphohydrolase</fullName>
        <ecNumber evidence="1">3.6.1.-</ecNumber>
    </recommendedName>
    <alternativeName>
        <fullName evidence="1">(Di)nucleoside polyphosphate hydrolase</fullName>
    </alternativeName>
</protein>
<feature type="chain" id="PRO_1000021967" description="RNA pyrophosphohydrolase">
    <location>
        <begin position="1"/>
        <end position="161"/>
    </location>
</feature>
<feature type="domain" description="Nudix hydrolase" evidence="1">
    <location>
        <begin position="12"/>
        <end position="154"/>
    </location>
</feature>
<feature type="short sequence motif" description="Nudix box">
    <location>
        <begin position="46"/>
        <end position="67"/>
    </location>
</feature>
<organism>
    <name type="scientific">Orientia tsutsugamushi (strain Boryong)</name>
    <name type="common">Rickettsia tsutsugamushi</name>
    <dbReference type="NCBI Taxonomy" id="357244"/>
    <lineage>
        <taxon>Bacteria</taxon>
        <taxon>Pseudomonadati</taxon>
        <taxon>Pseudomonadota</taxon>
        <taxon>Alphaproteobacteria</taxon>
        <taxon>Rickettsiales</taxon>
        <taxon>Rickettsiaceae</taxon>
        <taxon>Rickettsieae</taxon>
        <taxon>Orientia</taxon>
    </lineage>
</organism>
<proteinExistence type="inferred from homology"/>
<sequence>MDDKIKNYNNLPYRIGVGMVIINQKKEIFTGQRIDSARQYWQMPQGGIILGETYSKAVLREMKEEIGCNKAIIMAESRNWYSYHIPKFLVHKLWNSNFKGQKQKWFLIKFLGKDEDININTIYPEFSQWKWMNSNQLINNALPFKRKLYKAVINEFHIFLL</sequence>